<reference key="1">
    <citation type="journal article" date="1998" name="Science">
        <title>Genome sequence of an obligate intracellular pathogen of humans: Chlamydia trachomatis.</title>
        <authorList>
            <person name="Stephens R.S."/>
            <person name="Kalman S."/>
            <person name="Lammel C.J."/>
            <person name="Fan J."/>
            <person name="Marathe R."/>
            <person name="Aravind L."/>
            <person name="Mitchell W.P."/>
            <person name="Olinger L."/>
            <person name="Tatusov R.L."/>
            <person name="Zhao Q."/>
            <person name="Koonin E.V."/>
            <person name="Davis R.W."/>
        </authorList>
    </citation>
    <scope>NUCLEOTIDE SEQUENCE [LARGE SCALE GENOMIC DNA]</scope>
    <source>
        <strain>ATCC VR-885 / DSM 19411 / UW-3/Cx</strain>
    </source>
</reference>
<organism>
    <name type="scientific">Chlamydia trachomatis serovar D (strain ATCC VR-885 / DSM 19411 / UW-3/Cx)</name>
    <dbReference type="NCBI Taxonomy" id="272561"/>
    <lineage>
        <taxon>Bacteria</taxon>
        <taxon>Pseudomonadati</taxon>
        <taxon>Chlamydiota</taxon>
        <taxon>Chlamydiia</taxon>
        <taxon>Chlamydiales</taxon>
        <taxon>Chlamydiaceae</taxon>
        <taxon>Chlamydia/Chlamydophila group</taxon>
        <taxon>Chlamydia</taxon>
    </lineage>
</organism>
<name>RL5_CHLTR</name>
<gene>
    <name evidence="1" type="primary">rplE</name>
    <name type="synonym">rl5</name>
    <name type="ordered locus">CT_516</name>
</gene>
<protein>
    <recommendedName>
        <fullName evidence="1">Large ribosomal subunit protein uL5</fullName>
    </recommendedName>
    <alternativeName>
        <fullName evidence="2">50S ribosomal protein L5</fullName>
    </alternativeName>
</protein>
<evidence type="ECO:0000255" key="1">
    <source>
        <dbReference type="HAMAP-Rule" id="MF_01333"/>
    </source>
</evidence>
<evidence type="ECO:0000305" key="2"/>
<sequence length="180" mass="20581">MSRLKKLYTEEIRKTLQDKFQYENVMQIPVLKKIVISMGLAEAAKDKNLFQAHLEELAVISSQKPLVTRARNSIAGFKLREGQGIGAKVTLRGIRMYDFMDRFCNIVSPRIRDFRGFSCKGDGRGCYSFGLDDQQIFPEVDLDRVKRSQGMNITWVTTAQTDAECLTLLECMGLRFKKAQ</sequence>
<accession>P0CD88</accession>
<accession>O84522</accession>
<accession>P28531</accession>
<feature type="chain" id="PRO_0000124914" description="Large ribosomal subunit protein uL5">
    <location>
        <begin position="1"/>
        <end position="180"/>
    </location>
</feature>
<keyword id="KW-1185">Reference proteome</keyword>
<keyword id="KW-0687">Ribonucleoprotein</keyword>
<keyword id="KW-0689">Ribosomal protein</keyword>
<keyword id="KW-0694">RNA-binding</keyword>
<keyword id="KW-0699">rRNA-binding</keyword>
<keyword id="KW-0820">tRNA-binding</keyword>
<dbReference type="EMBL" id="AE001273">
    <property type="protein sequence ID" value="AAC68117.1"/>
    <property type="molecule type" value="Genomic_DNA"/>
</dbReference>
<dbReference type="PIR" id="B71506">
    <property type="entry name" value="B71506"/>
</dbReference>
<dbReference type="RefSeq" id="NP_220031.1">
    <property type="nucleotide sequence ID" value="NC_000117.1"/>
</dbReference>
<dbReference type="RefSeq" id="WP_009871880.1">
    <property type="nucleotide sequence ID" value="NC_000117.1"/>
</dbReference>
<dbReference type="SMR" id="P0CD88"/>
<dbReference type="FunCoup" id="P0CD88">
    <property type="interactions" value="276"/>
</dbReference>
<dbReference type="STRING" id="272561.CT_516"/>
<dbReference type="EnsemblBacteria" id="AAC68117">
    <property type="protein sequence ID" value="AAC68117"/>
    <property type="gene ID" value="CT_516"/>
</dbReference>
<dbReference type="GeneID" id="884292"/>
<dbReference type="KEGG" id="ctr:CT_516"/>
<dbReference type="PATRIC" id="fig|272561.5.peg.560"/>
<dbReference type="HOGENOM" id="CLU_061015_2_1_0"/>
<dbReference type="InParanoid" id="P0CD88"/>
<dbReference type="OrthoDB" id="9806626at2"/>
<dbReference type="Proteomes" id="UP000000431">
    <property type="component" value="Chromosome"/>
</dbReference>
<dbReference type="GO" id="GO:0022625">
    <property type="term" value="C:cytosolic large ribosomal subunit"/>
    <property type="evidence" value="ECO:0000318"/>
    <property type="project" value="GO_Central"/>
</dbReference>
<dbReference type="GO" id="GO:0003723">
    <property type="term" value="F:RNA binding"/>
    <property type="evidence" value="ECO:0000318"/>
    <property type="project" value="GO_Central"/>
</dbReference>
<dbReference type="GO" id="GO:0019843">
    <property type="term" value="F:rRNA binding"/>
    <property type="evidence" value="ECO:0007669"/>
    <property type="project" value="UniProtKB-UniRule"/>
</dbReference>
<dbReference type="GO" id="GO:0003735">
    <property type="term" value="F:structural constituent of ribosome"/>
    <property type="evidence" value="ECO:0000318"/>
    <property type="project" value="GO_Central"/>
</dbReference>
<dbReference type="GO" id="GO:0000049">
    <property type="term" value="F:tRNA binding"/>
    <property type="evidence" value="ECO:0007669"/>
    <property type="project" value="UniProtKB-UniRule"/>
</dbReference>
<dbReference type="GO" id="GO:0006412">
    <property type="term" value="P:translation"/>
    <property type="evidence" value="ECO:0000318"/>
    <property type="project" value="GO_Central"/>
</dbReference>
<dbReference type="FunFam" id="3.30.1440.10:FF:000001">
    <property type="entry name" value="50S ribosomal protein L5"/>
    <property type="match status" value="1"/>
</dbReference>
<dbReference type="Gene3D" id="3.30.1440.10">
    <property type="match status" value="1"/>
</dbReference>
<dbReference type="HAMAP" id="MF_01333_B">
    <property type="entry name" value="Ribosomal_uL5_B"/>
    <property type="match status" value="1"/>
</dbReference>
<dbReference type="InterPro" id="IPR002132">
    <property type="entry name" value="Ribosomal_uL5"/>
</dbReference>
<dbReference type="InterPro" id="IPR020930">
    <property type="entry name" value="Ribosomal_uL5_bac-type"/>
</dbReference>
<dbReference type="InterPro" id="IPR031309">
    <property type="entry name" value="Ribosomal_uL5_C"/>
</dbReference>
<dbReference type="InterPro" id="IPR022803">
    <property type="entry name" value="Ribosomal_uL5_dom_sf"/>
</dbReference>
<dbReference type="InterPro" id="IPR031310">
    <property type="entry name" value="Ribosomal_uL5_N"/>
</dbReference>
<dbReference type="NCBIfam" id="NF000585">
    <property type="entry name" value="PRK00010.1"/>
    <property type="match status" value="1"/>
</dbReference>
<dbReference type="PANTHER" id="PTHR11994">
    <property type="entry name" value="60S RIBOSOMAL PROTEIN L11-RELATED"/>
    <property type="match status" value="1"/>
</dbReference>
<dbReference type="Pfam" id="PF00281">
    <property type="entry name" value="Ribosomal_L5"/>
    <property type="match status" value="1"/>
</dbReference>
<dbReference type="Pfam" id="PF00673">
    <property type="entry name" value="Ribosomal_L5_C"/>
    <property type="match status" value="1"/>
</dbReference>
<dbReference type="PIRSF" id="PIRSF002161">
    <property type="entry name" value="Ribosomal_L5"/>
    <property type="match status" value="1"/>
</dbReference>
<dbReference type="SUPFAM" id="SSF55282">
    <property type="entry name" value="RL5-like"/>
    <property type="match status" value="1"/>
</dbReference>
<comment type="function">
    <text evidence="1">This is one of the proteins that bind and probably mediate the attachment of the 5S RNA into the large ribosomal subunit, where it forms part of the central protuberance. In the 70S ribosome it contacts protein S13 of the 30S subunit (bridge B1b), connecting the 2 subunits; this bridge is implicated in subunit movement. Contacts the P site tRNA; the 5S rRNA and some of its associated proteins might help stabilize positioning of ribosome-bound tRNAs.</text>
</comment>
<comment type="subunit">
    <text evidence="1">Part of the 50S ribosomal subunit; part of the 5S rRNA/L5/L18/L25 subcomplex. Contacts the 5S rRNA and the P site tRNA. Forms a bridge to the 30S subunit in the 70S ribosome.</text>
</comment>
<comment type="similarity">
    <text evidence="1">Belongs to the universal ribosomal protein uL5 family.</text>
</comment>
<proteinExistence type="inferred from homology"/>